<comment type="function">
    <text>Required for the export of heme to the periplasm for the biogenesis of c-type cytochromes.</text>
</comment>
<comment type="subcellular location">
    <subcellularLocation>
        <location evidence="2">Cell inner membrane</location>
        <topology evidence="2">Multi-pass membrane protein</topology>
    </subcellularLocation>
</comment>
<comment type="similarity">
    <text evidence="2">Belongs to the CcmB/CycW/HelB family.</text>
</comment>
<gene>
    <name type="primary">helB</name>
    <name type="synonym">ccmB</name>
    <name type="ordered locus">RCAP_rcc01786</name>
</gene>
<accession>P29960</accession>
<accession>D5AU92</accession>
<name>CCMB_RHOCB</name>
<dbReference type="EMBL" id="X63462">
    <property type="protein sequence ID" value="CAA45062.1"/>
    <property type="molecule type" value="Genomic_DNA"/>
</dbReference>
<dbReference type="EMBL" id="CP001312">
    <property type="protein sequence ID" value="ADE85531.1"/>
    <property type="molecule type" value="Genomic_DNA"/>
</dbReference>
<dbReference type="PIR" id="S23664">
    <property type="entry name" value="S23664"/>
</dbReference>
<dbReference type="RefSeq" id="WP_013067510.1">
    <property type="nucleotide sequence ID" value="NC_014034.1"/>
</dbReference>
<dbReference type="SMR" id="P29960"/>
<dbReference type="STRING" id="272942.RCAP_rcc01786"/>
<dbReference type="GeneID" id="31490661"/>
<dbReference type="KEGG" id="rcp:RCAP_rcc01786"/>
<dbReference type="eggNOG" id="COG2386">
    <property type="taxonomic scope" value="Bacteria"/>
</dbReference>
<dbReference type="HOGENOM" id="CLU_079069_1_0_5"/>
<dbReference type="OrthoDB" id="9812915at2"/>
<dbReference type="Proteomes" id="UP000002361">
    <property type="component" value="Chromosome"/>
</dbReference>
<dbReference type="GO" id="GO:0005886">
    <property type="term" value="C:plasma membrane"/>
    <property type="evidence" value="ECO:0007669"/>
    <property type="project" value="UniProtKB-SubCell"/>
</dbReference>
<dbReference type="GO" id="GO:0015232">
    <property type="term" value="F:heme transmembrane transporter activity"/>
    <property type="evidence" value="ECO:0007669"/>
    <property type="project" value="InterPro"/>
</dbReference>
<dbReference type="GO" id="GO:1903607">
    <property type="term" value="P:cytochrome c biosynthetic process"/>
    <property type="evidence" value="ECO:0007669"/>
    <property type="project" value="TreeGrafter"/>
</dbReference>
<dbReference type="GO" id="GO:0017004">
    <property type="term" value="P:cytochrome complex assembly"/>
    <property type="evidence" value="ECO:0007669"/>
    <property type="project" value="UniProtKB-KW"/>
</dbReference>
<dbReference type="InterPro" id="IPR003544">
    <property type="entry name" value="Cyt_c_biogenesis_CcmB"/>
</dbReference>
<dbReference type="InterPro" id="IPR026031">
    <property type="entry name" value="Cyt_c_CcmB_bac"/>
</dbReference>
<dbReference type="NCBIfam" id="TIGR01190">
    <property type="entry name" value="ccmB"/>
    <property type="match status" value="1"/>
</dbReference>
<dbReference type="PANTHER" id="PTHR30070:SF1">
    <property type="entry name" value="CYTOCHROME C BIOGENESIS B-RELATED"/>
    <property type="match status" value="1"/>
</dbReference>
<dbReference type="PANTHER" id="PTHR30070">
    <property type="entry name" value="HEME EXPORTER PROTEIN B"/>
    <property type="match status" value="1"/>
</dbReference>
<dbReference type="Pfam" id="PF03379">
    <property type="entry name" value="CcmB"/>
    <property type="match status" value="1"/>
</dbReference>
<dbReference type="PIRSF" id="PIRSF002764">
    <property type="entry name" value="CcmB"/>
    <property type="match status" value="1"/>
</dbReference>
<dbReference type="PRINTS" id="PR01414">
    <property type="entry name" value="CCMBBIOGNSIS"/>
</dbReference>
<feature type="chain" id="PRO_0000201546" description="Heme exporter protein B">
    <location>
        <begin position="1"/>
        <end position="218"/>
    </location>
</feature>
<feature type="transmembrane region" description="Helical" evidence="1">
    <location>
        <begin position="18"/>
        <end position="38"/>
    </location>
</feature>
<feature type="transmembrane region" description="Helical" evidence="1">
    <location>
        <begin position="43"/>
        <end position="63"/>
    </location>
</feature>
<feature type="transmembrane region" description="Helical" evidence="1">
    <location>
        <begin position="99"/>
        <end position="119"/>
    </location>
</feature>
<feature type="transmembrane region" description="Helical" evidence="1">
    <location>
        <begin position="131"/>
        <end position="151"/>
    </location>
</feature>
<feature type="transmembrane region" description="Helical" evidence="1">
    <location>
        <begin position="155"/>
        <end position="175"/>
    </location>
</feature>
<feature type="transmembrane region" description="Helical" evidence="1">
    <location>
        <begin position="185"/>
        <end position="205"/>
    </location>
</feature>
<feature type="sequence conflict" description="In Ref. 1; CAA45062." evidence="2" ref="1">
    <original>P</original>
    <variation>S</variation>
    <location>
        <position position="160"/>
    </location>
</feature>
<feature type="sequence conflict" description="In Ref. 1; CAA45062." evidence="2" ref="1">
    <original>A</original>
    <variation>V</variation>
    <location>
        <position position="163"/>
    </location>
</feature>
<protein>
    <recommendedName>
        <fullName>Heme exporter protein B</fullName>
    </recommendedName>
    <alternativeName>
        <fullName>Cytochrome c-type biogenesis protein HelB</fullName>
    </alternativeName>
</protein>
<reference key="1">
    <citation type="journal article" date="1992" name="Genes Dev.">
        <title>Bacterial cytochromes c biogenesis.</title>
        <authorList>
            <person name="Beckman D.L."/>
            <person name="Trawick D.R."/>
            <person name="Kranz R.G."/>
        </authorList>
    </citation>
    <scope>NUCLEOTIDE SEQUENCE [GENOMIC DNA]</scope>
    <source>
        <strain>ATCC BAA-309 / NBRC 16581 / SB1003</strain>
    </source>
</reference>
<reference key="2">
    <citation type="journal article" date="2010" name="J. Bacteriol.">
        <title>Complete genome sequence of the photosynthetic purple nonsulfur bacterium Rhodobacter capsulatus SB 1003.</title>
        <authorList>
            <person name="Strnad H."/>
            <person name="Lapidus A."/>
            <person name="Paces J."/>
            <person name="Ulbrich P."/>
            <person name="Vlcek C."/>
            <person name="Paces V."/>
            <person name="Haselkorn R."/>
        </authorList>
    </citation>
    <scope>NUCLEOTIDE SEQUENCE [LARGE SCALE GENOMIC DNA]</scope>
    <source>
        <strain>ATCC BAA-309 / NBRC 16581 / SB1003</strain>
    </source>
</reference>
<proteinExistence type="inferred from homology"/>
<keyword id="KW-0997">Cell inner membrane</keyword>
<keyword id="KW-1003">Cell membrane</keyword>
<keyword id="KW-0201">Cytochrome c-type biogenesis</keyword>
<keyword id="KW-0472">Membrane</keyword>
<keyword id="KW-1185">Reference proteome</keyword>
<keyword id="KW-0812">Transmembrane</keyword>
<keyword id="KW-1133">Transmembrane helix</keyword>
<keyword id="KW-0813">Transport</keyword>
<organism>
    <name type="scientific">Rhodobacter capsulatus (strain ATCC BAA-309 / NBRC 16581 / SB1003)</name>
    <dbReference type="NCBI Taxonomy" id="272942"/>
    <lineage>
        <taxon>Bacteria</taxon>
        <taxon>Pseudomonadati</taxon>
        <taxon>Pseudomonadota</taxon>
        <taxon>Alphaproteobacteria</taxon>
        <taxon>Rhodobacterales</taxon>
        <taxon>Rhodobacter group</taxon>
        <taxon>Rhodobacter</taxon>
    </lineage>
</organism>
<sequence>MRALLSRDLRLAIRAGGGFGLGLAFFLIVVTLVPFGVGPQGEILARIASGILWLGALLACLLSLDRIFALDFEDGSLDLLATAPIPMEAVVTIKALAHWITTGLPLVLAAPLFAVLLHLPAPAYLWLEVSLLLGTPALSVLGTFGAALTVGLKRGGLLLPLLALPLYVPTLIFGAELVRRGAEGLAIEVPLAMLAGITAATVALVPFASAAAIRVNLR</sequence>
<evidence type="ECO:0000255" key="1"/>
<evidence type="ECO:0000305" key="2"/>